<protein>
    <recommendedName>
        <fullName evidence="1">Light-independent protochlorophyllide reductase subunit N</fullName>
        <shortName evidence="1">DPOR subunit N</shortName>
        <shortName evidence="1">LI-POR subunit N</shortName>
        <ecNumber evidence="1">1.3.7.7</ecNumber>
    </recommendedName>
</protein>
<reference key="1">
    <citation type="journal article" date="2003" name="DNA Res.">
        <title>Complete genome structure of Gloeobacter violaceus PCC 7421, a cyanobacterium that lacks thylakoids.</title>
        <authorList>
            <person name="Nakamura Y."/>
            <person name="Kaneko T."/>
            <person name="Sato S."/>
            <person name="Mimuro M."/>
            <person name="Miyashita H."/>
            <person name="Tsuchiya T."/>
            <person name="Sasamoto S."/>
            <person name="Watanabe A."/>
            <person name="Kawashima K."/>
            <person name="Kishida Y."/>
            <person name="Kiyokawa C."/>
            <person name="Kohara M."/>
            <person name="Matsumoto M."/>
            <person name="Matsuno A."/>
            <person name="Nakazaki N."/>
            <person name="Shimpo S."/>
            <person name="Takeuchi C."/>
            <person name="Yamada M."/>
            <person name="Tabata S."/>
        </authorList>
    </citation>
    <scope>NUCLEOTIDE SEQUENCE [LARGE SCALE GENOMIC DNA]</scope>
    <source>
        <strain>ATCC 29082 / PCC 7421</strain>
    </source>
</reference>
<proteinExistence type="inferred from homology"/>
<accession>Q7NI15</accession>
<evidence type="ECO:0000255" key="1">
    <source>
        <dbReference type="HAMAP-Rule" id="MF_00352"/>
    </source>
</evidence>
<comment type="function">
    <text evidence="1">Component of the dark-operative protochlorophyllide reductase (DPOR) that uses Mg-ATP and reduced ferredoxin to reduce ring D of protochlorophyllide (Pchlide) to form chlorophyllide a (Chlide). This reaction is light-independent. The NB-protein (ChlN-ChlB) is the catalytic component of the complex.</text>
</comment>
<comment type="catalytic activity">
    <reaction evidence="1">
        <text>chlorophyllide a + oxidized 2[4Fe-4S]-[ferredoxin] + 2 ADP + 2 phosphate = protochlorophyllide a + reduced 2[4Fe-4S]-[ferredoxin] + 2 ATP + 2 H2O</text>
        <dbReference type="Rhea" id="RHEA:28202"/>
        <dbReference type="Rhea" id="RHEA-COMP:10002"/>
        <dbReference type="Rhea" id="RHEA-COMP:10004"/>
        <dbReference type="ChEBI" id="CHEBI:15377"/>
        <dbReference type="ChEBI" id="CHEBI:30616"/>
        <dbReference type="ChEBI" id="CHEBI:33722"/>
        <dbReference type="ChEBI" id="CHEBI:33723"/>
        <dbReference type="ChEBI" id="CHEBI:43474"/>
        <dbReference type="ChEBI" id="CHEBI:83348"/>
        <dbReference type="ChEBI" id="CHEBI:83350"/>
        <dbReference type="ChEBI" id="CHEBI:456216"/>
        <dbReference type="EC" id="1.3.7.7"/>
    </reaction>
</comment>
<comment type="cofactor">
    <cofactor evidence="1">
        <name>[4Fe-4S] cluster</name>
        <dbReference type="ChEBI" id="CHEBI:49883"/>
    </cofactor>
    <text evidence="1">Binds 1 [4Fe-4S] cluster per heterodimer. The cluster is bound at the heterodimer interface by residues from both subunits.</text>
</comment>
<comment type="pathway">
    <text evidence="1">Porphyrin-containing compound metabolism; chlorophyll biosynthesis (light-independent).</text>
</comment>
<comment type="subunit">
    <text evidence="1">Protochlorophyllide reductase is composed of three subunits; ChlL, ChlN and ChlB. Forms a heterotetramer of two ChlB and two ChlN subunits.</text>
</comment>
<comment type="similarity">
    <text evidence="1">Belongs to the BchN/ChlN family.</text>
</comment>
<organism>
    <name type="scientific">Gloeobacter violaceus (strain ATCC 29082 / PCC 7421)</name>
    <dbReference type="NCBI Taxonomy" id="251221"/>
    <lineage>
        <taxon>Bacteria</taxon>
        <taxon>Bacillati</taxon>
        <taxon>Cyanobacteriota</taxon>
        <taxon>Cyanophyceae</taxon>
        <taxon>Gloeobacterales</taxon>
        <taxon>Gloeobacteraceae</taxon>
        <taxon>Gloeobacter</taxon>
    </lineage>
</organism>
<dbReference type="EC" id="1.3.7.7" evidence="1"/>
<dbReference type="EMBL" id="BA000045">
    <property type="protein sequence ID" value="BAC90310.1"/>
    <property type="molecule type" value="Genomic_DNA"/>
</dbReference>
<dbReference type="RefSeq" id="NP_925315.1">
    <property type="nucleotide sequence ID" value="NC_005125.1"/>
</dbReference>
<dbReference type="RefSeq" id="WP_011142365.1">
    <property type="nucleotide sequence ID" value="NC_005125.1"/>
</dbReference>
<dbReference type="SMR" id="Q7NI15"/>
<dbReference type="STRING" id="251221.gene:10759866"/>
<dbReference type="EnsemblBacteria" id="BAC90310">
    <property type="protein sequence ID" value="BAC90310"/>
    <property type="gene ID" value="BAC90310"/>
</dbReference>
<dbReference type="KEGG" id="gvi:gll2369"/>
<dbReference type="PATRIC" id="fig|251221.4.peg.2408"/>
<dbReference type="eggNOG" id="COG2710">
    <property type="taxonomic scope" value="Bacteria"/>
</dbReference>
<dbReference type="HOGENOM" id="CLU_037170_0_0_3"/>
<dbReference type="InParanoid" id="Q7NI15"/>
<dbReference type="OrthoDB" id="5714774at2"/>
<dbReference type="PhylomeDB" id="Q7NI15"/>
<dbReference type="UniPathway" id="UPA00670"/>
<dbReference type="Proteomes" id="UP000000557">
    <property type="component" value="Chromosome"/>
</dbReference>
<dbReference type="GO" id="GO:0051539">
    <property type="term" value="F:4 iron, 4 sulfur cluster binding"/>
    <property type="evidence" value="ECO:0007669"/>
    <property type="project" value="UniProtKB-UniRule"/>
</dbReference>
<dbReference type="GO" id="GO:0005524">
    <property type="term" value="F:ATP binding"/>
    <property type="evidence" value="ECO:0007669"/>
    <property type="project" value="UniProtKB-UniRule"/>
</dbReference>
<dbReference type="GO" id="GO:0046872">
    <property type="term" value="F:metal ion binding"/>
    <property type="evidence" value="ECO:0007669"/>
    <property type="project" value="UniProtKB-KW"/>
</dbReference>
<dbReference type="GO" id="GO:0016730">
    <property type="term" value="F:oxidoreductase activity, acting on iron-sulfur proteins as donors"/>
    <property type="evidence" value="ECO:0007669"/>
    <property type="project" value="InterPro"/>
</dbReference>
<dbReference type="GO" id="GO:0016636">
    <property type="term" value="F:oxidoreductase activity, acting on the CH-CH group of donors, iron-sulfur protein as acceptor"/>
    <property type="evidence" value="ECO:0007669"/>
    <property type="project" value="UniProtKB-UniRule"/>
</dbReference>
<dbReference type="GO" id="GO:0036068">
    <property type="term" value="P:light-independent chlorophyll biosynthetic process"/>
    <property type="evidence" value="ECO:0007669"/>
    <property type="project" value="UniProtKB-UniRule"/>
</dbReference>
<dbReference type="GO" id="GO:0019685">
    <property type="term" value="P:photosynthesis, dark reaction"/>
    <property type="evidence" value="ECO:0007669"/>
    <property type="project" value="InterPro"/>
</dbReference>
<dbReference type="CDD" id="cd01979">
    <property type="entry name" value="Pchlide_reductase_N"/>
    <property type="match status" value="1"/>
</dbReference>
<dbReference type="Gene3D" id="3.40.50.1980">
    <property type="entry name" value="Nitrogenase molybdenum iron protein domain"/>
    <property type="match status" value="3"/>
</dbReference>
<dbReference type="HAMAP" id="MF_00352">
    <property type="entry name" value="ChlN_BchN"/>
    <property type="match status" value="1"/>
</dbReference>
<dbReference type="InterPro" id="IPR050293">
    <property type="entry name" value="LIPOR_BchN/ChlN"/>
</dbReference>
<dbReference type="InterPro" id="IPR000510">
    <property type="entry name" value="Nase/OxRdtase_comp1"/>
</dbReference>
<dbReference type="InterPro" id="IPR005970">
    <property type="entry name" value="Protochl_reductN"/>
</dbReference>
<dbReference type="NCBIfam" id="TIGR01279">
    <property type="entry name" value="DPOR_bchN"/>
    <property type="match status" value="1"/>
</dbReference>
<dbReference type="NCBIfam" id="NF002768">
    <property type="entry name" value="PRK02842.1"/>
    <property type="match status" value="1"/>
</dbReference>
<dbReference type="PANTHER" id="PTHR39429">
    <property type="entry name" value="LIGHT-INDEPENDENT PROTOCHLOROPHYLLIDE REDUCTASE SUBUNIT N"/>
    <property type="match status" value="1"/>
</dbReference>
<dbReference type="PANTHER" id="PTHR39429:SF3">
    <property type="entry name" value="LIGHT-INDEPENDENT PROTOCHLOROPHYLLIDE REDUCTASE SUBUNIT N"/>
    <property type="match status" value="1"/>
</dbReference>
<dbReference type="Pfam" id="PF00148">
    <property type="entry name" value="Oxidored_nitro"/>
    <property type="match status" value="1"/>
</dbReference>
<dbReference type="PIRSF" id="PIRSF000162">
    <property type="entry name" value="P_chlorophyll_rd"/>
    <property type="match status" value="1"/>
</dbReference>
<dbReference type="SUPFAM" id="SSF53807">
    <property type="entry name" value="Helical backbone' metal receptor"/>
    <property type="match status" value="1"/>
</dbReference>
<feature type="chain" id="PRO_0000208600" description="Light-independent protochlorophyllide reductase subunit N">
    <location>
        <begin position="1"/>
        <end position="469"/>
    </location>
</feature>
<feature type="binding site" evidence="1">
    <location>
        <position position="24"/>
    </location>
    <ligand>
        <name>[4Fe-4S] cluster</name>
        <dbReference type="ChEBI" id="CHEBI:49883"/>
        <note>ligand shared with heterodimeric partner</note>
    </ligand>
</feature>
<feature type="binding site" evidence="1">
    <location>
        <position position="49"/>
    </location>
    <ligand>
        <name>[4Fe-4S] cluster</name>
        <dbReference type="ChEBI" id="CHEBI:49883"/>
        <note>ligand shared with heterodimeric partner</note>
    </ligand>
</feature>
<feature type="binding site" evidence="1">
    <location>
        <position position="109"/>
    </location>
    <ligand>
        <name>[4Fe-4S] cluster</name>
        <dbReference type="ChEBI" id="CHEBI:49883"/>
        <note>ligand shared with heterodimeric partner</note>
    </ligand>
</feature>
<gene>
    <name evidence="1" type="primary">chlN</name>
    <name type="ordered locus">gll2369</name>
</gene>
<sequence>MVSQPTTSSGPQFECETGNYHTFCPISCVAWLYQKIEDSFFLVIGTKTCGYFLQNAMGVMIFAEPRYAMAELEEGDVNAKLNAYDELQRLCLQVKKDRNPSVIVWIGTCTTEIIKMDLEGIAPKLEDEIGIPIVVARANGLDYAFTQGEDTVLAAMASRCPAPQEVRSEEEKKERTGGLRTLFSHGKKDEKKAGPAPSEYVDHQPLVLFGSLTDPVVNQLTLELKKQGIRVSGWLPAPRYTELPIVEQGVTYVAGVNPFLSRTASALQRRMRCNLITTPFPIGPDGTRGWIEAICQALGVIPKGLDEREQQIWDALRDDVEFLKGRSVFFMGDNLLEVSMARFLIRCGMIVHEVGIPYMDKRYQQAELELLDRTCRELGHPPVRIVEKPDNYNQIQRIYACKPDLVITGMAHANPLEARGITTKWSVEFTFAMIHGFTNAHDMLKMVRKPLDRNNALKSLGWEKLIQEV</sequence>
<keyword id="KW-0004">4Fe-4S</keyword>
<keyword id="KW-0067">ATP-binding</keyword>
<keyword id="KW-0149">Chlorophyll biosynthesis</keyword>
<keyword id="KW-0408">Iron</keyword>
<keyword id="KW-0411">Iron-sulfur</keyword>
<keyword id="KW-0479">Metal-binding</keyword>
<keyword id="KW-0547">Nucleotide-binding</keyword>
<keyword id="KW-0560">Oxidoreductase</keyword>
<keyword id="KW-0602">Photosynthesis</keyword>
<keyword id="KW-1185">Reference proteome</keyword>
<name>CHLN_GLOVI</name>